<name>PYRB_BURM1</name>
<accession>A9AFI4</accession>
<reference key="1">
    <citation type="submission" date="2007-10" db="EMBL/GenBank/DDBJ databases">
        <title>Complete sequence of chromosome 1 of Burkholderia multivorans ATCC 17616.</title>
        <authorList>
            <person name="Copeland A."/>
            <person name="Lucas S."/>
            <person name="Lapidus A."/>
            <person name="Barry K."/>
            <person name="Glavina del Rio T."/>
            <person name="Dalin E."/>
            <person name="Tice H."/>
            <person name="Pitluck S."/>
            <person name="Chain P."/>
            <person name="Malfatti S."/>
            <person name="Shin M."/>
            <person name="Vergez L."/>
            <person name="Schmutz J."/>
            <person name="Larimer F."/>
            <person name="Land M."/>
            <person name="Hauser L."/>
            <person name="Kyrpides N."/>
            <person name="Kim E."/>
            <person name="Tiedje J."/>
            <person name="Richardson P."/>
        </authorList>
    </citation>
    <scope>NUCLEOTIDE SEQUENCE [LARGE SCALE GENOMIC DNA]</scope>
    <source>
        <strain>ATCC 17616 / 249</strain>
    </source>
</reference>
<reference key="2">
    <citation type="submission" date="2007-04" db="EMBL/GenBank/DDBJ databases">
        <title>Complete genome sequence of Burkholderia multivorans ATCC 17616.</title>
        <authorList>
            <person name="Ohtsubo Y."/>
            <person name="Yamashita A."/>
            <person name="Kurokawa K."/>
            <person name="Takami H."/>
            <person name="Yuhara S."/>
            <person name="Nishiyama E."/>
            <person name="Endo R."/>
            <person name="Miyazaki R."/>
            <person name="Ono A."/>
            <person name="Yano K."/>
            <person name="Ito M."/>
            <person name="Sota M."/>
            <person name="Yuji N."/>
            <person name="Hattori M."/>
            <person name="Tsuda M."/>
        </authorList>
    </citation>
    <scope>NUCLEOTIDE SEQUENCE [LARGE SCALE GENOMIC DNA]</scope>
    <source>
        <strain>ATCC 17616 / 249</strain>
    </source>
</reference>
<feature type="chain" id="PRO_1000088744" description="Aspartate carbamoyltransferase catalytic subunit">
    <location>
        <begin position="1"/>
        <end position="343"/>
    </location>
</feature>
<feature type="binding site" evidence="1">
    <location>
        <position position="91"/>
    </location>
    <ligand>
        <name>carbamoyl phosphate</name>
        <dbReference type="ChEBI" id="CHEBI:58228"/>
    </ligand>
</feature>
<feature type="binding site" evidence="1">
    <location>
        <position position="92"/>
    </location>
    <ligand>
        <name>carbamoyl phosphate</name>
        <dbReference type="ChEBI" id="CHEBI:58228"/>
    </ligand>
</feature>
<feature type="binding site" evidence="1">
    <location>
        <position position="119"/>
    </location>
    <ligand>
        <name>L-aspartate</name>
        <dbReference type="ChEBI" id="CHEBI:29991"/>
    </ligand>
</feature>
<feature type="binding site" evidence="1">
    <location>
        <position position="141"/>
    </location>
    <ligand>
        <name>carbamoyl phosphate</name>
        <dbReference type="ChEBI" id="CHEBI:58228"/>
    </ligand>
</feature>
<feature type="binding site" evidence="1">
    <location>
        <position position="171"/>
    </location>
    <ligand>
        <name>carbamoyl phosphate</name>
        <dbReference type="ChEBI" id="CHEBI:58228"/>
    </ligand>
</feature>
<feature type="binding site" evidence="1">
    <location>
        <position position="174"/>
    </location>
    <ligand>
        <name>carbamoyl phosphate</name>
        <dbReference type="ChEBI" id="CHEBI:58228"/>
    </ligand>
</feature>
<feature type="binding site" evidence="1">
    <location>
        <position position="204"/>
    </location>
    <ligand>
        <name>L-aspartate</name>
        <dbReference type="ChEBI" id="CHEBI:29991"/>
    </ligand>
</feature>
<feature type="binding site" evidence="1">
    <location>
        <position position="259"/>
    </location>
    <ligand>
        <name>L-aspartate</name>
        <dbReference type="ChEBI" id="CHEBI:29991"/>
    </ligand>
</feature>
<feature type="binding site" evidence="1">
    <location>
        <position position="300"/>
    </location>
    <ligand>
        <name>carbamoyl phosphate</name>
        <dbReference type="ChEBI" id="CHEBI:58228"/>
    </ligand>
</feature>
<feature type="binding site" evidence="1">
    <location>
        <position position="301"/>
    </location>
    <ligand>
        <name>carbamoyl phosphate</name>
        <dbReference type="ChEBI" id="CHEBI:58228"/>
    </ligand>
</feature>
<proteinExistence type="inferred from homology"/>
<comment type="function">
    <text evidence="1">Catalyzes the condensation of carbamoyl phosphate and aspartate to form carbamoyl aspartate and inorganic phosphate, the committed step in the de novo pyrimidine nucleotide biosynthesis pathway.</text>
</comment>
<comment type="catalytic activity">
    <reaction evidence="1">
        <text>carbamoyl phosphate + L-aspartate = N-carbamoyl-L-aspartate + phosphate + H(+)</text>
        <dbReference type="Rhea" id="RHEA:20013"/>
        <dbReference type="ChEBI" id="CHEBI:15378"/>
        <dbReference type="ChEBI" id="CHEBI:29991"/>
        <dbReference type="ChEBI" id="CHEBI:32814"/>
        <dbReference type="ChEBI" id="CHEBI:43474"/>
        <dbReference type="ChEBI" id="CHEBI:58228"/>
        <dbReference type="EC" id="2.1.3.2"/>
    </reaction>
</comment>
<comment type="pathway">
    <text evidence="1">Pyrimidine metabolism; UMP biosynthesis via de novo pathway; (S)-dihydroorotate from bicarbonate: step 2/3.</text>
</comment>
<comment type="subunit">
    <text evidence="1">Heterododecamer (2C3:3R2) of six catalytic PyrB chains organized as two trimers (C3), and six regulatory PyrI chains organized as three dimers (R2).</text>
</comment>
<comment type="similarity">
    <text evidence="1">Belongs to the aspartate/ornithine carbamoyltransferase superfamily. ATCase family.</text>
</comment>
<protein>
    <recommendedName>
        <fullName evidence="1">Aspartate carbamoyltransferase catalytic subunit</fullName>
        <ecNumber evidence="1">2.1.3.2</ecNumber>
    </recommendedName>
    <alternativeName>
        <fullName evidence="1">Aspartate transcarbamylase</fullName>
        <shortName evidence="1">ATCase</shortName>
    </alternativeName>
</protein>
<keyword id="KW-0665">Pyrimidine biosynthesis</keyword>
<keyword id="KW-1185">Reference proteome</keyword>
<keyword id="KW-0808">Transferase</keyword>
<organism>
    <name type="scientific">Burkholderia multivorans (strain ATCC 17616 / 249)</name>
    <dbReference type="NCBI Taxonomy" id="395019"/>
    <lineage>
        <taxon>Bacteria</taxon>
        <taxon>Pseudomonadati</taxon>
        <taxon>Pseudomonadota</taxon>
        <taxon>Betaproteobacteria</taxon>
        <taxon>Burkholderiales</taxon>
        <taxon>Burkholderiaceae</taxon>
        <taxon>Burkholderia</taxon>
        <taxon>Burkholderia cepacia complex</taxon>
    </lineage>
</organism>
<dbReference type="EC" id="2.1.3.2" evidence="1"/>
<dbReference type="EMBL" id="CP000868">
    <property type="protein sequence ID" value="ABX16205.1"/>
    <property type="molecule type" value="Genomic_DNA"/>
</dbReference>
<dbReference type="EMBL" id="AP009385">
    <property type="protein sequence ID" value="BAG42680.1"/>
    <property type="molecule type" value="Genomic_DNA"/>
</dbReference>
<dbReference type="RefSeq" id="WP_006400966.1">
    <property type="nucleotide sequence ID" value="NC_010804.1"/>
</dbReference>
<dbReference type="SMR" id="A9AFI4"/>
<dbReference type="STRING" id="395019.BMULJ_00717"/>
<dbReference type="KEGG" id="bmj:BMULJ_00717"/>
<dbReference type="KEGG" id="bmu:Bmul_2521"/>
<dbReference type="eggNOG" id="COG0540">
    <property type="taxonomic scope" value="Bacteria"/>
</dbReference>
<dbReference type="HOGENOM" id="CLU_043846_2_0_4"/>
<dbReference type="UniPathway" id="UPA00070">
    <property type="reaction ID" value="UER00116"/>
</dbReference>
<dbReference type="Proteomes" id="UP000008815">
    <property type="component" value="Chromosome 1"/>
</dbReference>
<dbReference type="GO" id="GO:0005829">
    <property type="term" value="C:cytosol"/>
    <property type="evidence" value="ECO:0007669"/>
    <property type="project" value="TreeGrafter"/>
</dbReference>
<dbReference type="GO" id="GO:0016597">
    <property type="term" value="F:amino acid binding"/>
    <property type="evidence" value="ECO:0007669"/>
    <property type="project" value="InterPro"/>
</dbReference>
<dbReference type="GO" id="GO:0004070">
    <property type="term" value="F:aspartate carbamoyltransferase activity"/>
    <property type="evidence" value="ECO:0007669"/>
    <property type="project" value="UniProtKB-UniRule"/>
</dbReference>
<dbReference type="GO" id="GO:0006207">
    <property type="term" value="P:'de novo' pyrimidine nucleobase biosynthetic process"/>
    <property type="evidence" value="ECO:0007669"/>
    <property type="project" value="InterPro"/>
</dbReference>
<dbReference type="GO" id="GO:0044205">
    <property type="term" value="P:'de novo' UMP biosynthetic process"/>
    <property type="evidence" value="ECO:0007669"/>
    <property type="project" value="UniProtKB-UniRule"/>
</dbReference>
<dbReference type="GO" id="GO:0006520">
    <property type="term" value="P:amino acid metabolic process"/>
    <property type="evidence" value="ECO:0007669"/>
    <property type="project" value="InterPro"/>
</dbReference>
<dbReference type="FunFam" id="3.40.50.1370:FF:000007">
    <property type="entry name" value="Aspartate carbamoyltransferase"/>
    <property type="match status" value="1"/>
</dbReference>
<dbReference type="Gene3D" id="3.40.50.1370">
    <property type="entry name" value="Aspartate/ornithine carbamoyltransferase"/>
    <property type="match status" value="2"/>
</dbReference>
<dbReference type="HAMAP" id="MF_00001">
    <property type="entry name" value="Asp_carb_tr"/>
    <property type="match status" value="1"/>
</dbReference>
<dbReference type="InterPro" id="IPR006132">
    <property type="entry name" value="Asp/Orn_carbamoyltranf_P-bd"/>
</dbReference>
<dbReference type="InterPro" id="IPR006130">
    <property type="entry name" value="Asp/Orn_carbamoylTrfase"/>
</dbReference>
<dbReference type="InterPro" id="IPR036901">
    <property type="entry name" value="Asp/Orn_carbamoylTrfase_sf"/>
</dbReference>
<dbReference type="InterPro" id="IPR002082">
    <property type="entry name" value="Asp_carbamoyltransf"/>
</dbReference>
<dbReference type="InterPro" id="IPR006131">
    <property type="entry name" value="Asp_carbamoyltransf_Asp/Orn-bd"/>
</dbReference>
<dbReference type="NCBIfam" id="TIGR00670">
    <property type="entry name" value="asp_carb_tr"/>
    <property type="match status" value="1"/>
</dbReference>
<dbReference type="NCBIfam" id="NF002032">
    <property type="entry name" value="PRK00856.1"/>
    <property type="match status" value="1"/>
</dbReference>
<dbReference type="PANTHER" id="PTHR45753:SF6">
    <property type="entry name" value="ASPARTATE CARBAMOYLTRANSFERASE"/>
    <property type="match status" value="1"/>
</dbReference>
<dbReference type="PANTHER" id="PTHR45753">
    <property type="entry name" value="ORNITHINE CARBAMOYLTRANSFERASE, MITOCHONDRIAL"/>
    <property type="match status" value="1"/>
</dbReference>
<dbReference type="Pfam" id="PF00185">
    <property type="entry name" value="OTCace"/>
    <property type="match status" value="1"/>
</dbReference>
<dbReference type="Pfam" id="PF02729">
    <property type="entry name" value="OTCace_N"/>
    <property type="match status" value="1"/>
</dbReference>
<dbReference type="PRINTS" id="PR00100">
    <property type="entry name" value="AOTCASE"/>
</dbReference>
<dbReference type="PRINTS" id="PR00101">
    <property type="entry name" value="ATCASE"/>
</dbReference>
<dbReference type="SUPFAM" id="SSF53671">
    <property type="entry name" value="Aspartate/ornithine carbamoyltransferase"/>
    <property type="match status" value="1"/>
</dbReference>
<dbReference type="PROSITE" id="PS00097">
    <property type="entry name" value="CARBAMOYLTRANSFERASE"/>
    <property type="match status" value="1"/>
</dbReference>
<evidence type="ECO:0000255" key="1">
    <source>
        <dbReference type="HAMAP-Rule" id="MF_00001"/>
    </source>
</evidence>
<sequence>MTTDTTGRTGNPAAAASPERFRYGFLKGNPQLTKNGELKHLLSIEGLPRSIVNHILDTAEQFVSVTDREVKKVPLLRGKSVFNLFFENSTRTRTTFEIAATRLSADVLNLNINASSTSKGESLLDTINNLSAMHADLFVVRHASSGAPYLIAEHCAPHVHVINAGDGRHAHPTQGLLDMYTIRHYKRDFTKLRVAIVGDILHSRVARSDIHALTTLGVPEVRAIGPRTLLPGGLEQMGVKVFHNLDEGLKGVDVIIMLRLQNERMSGALLPSAQEYFKTWGLTPERLALAAPDAIVMHPGPMNRGVEIDSQVADGPQSVILNQVTFGIAVRMAVMGIVAGNND</sequence>
<gene>
    <name evidence="1" type="primary">pyrB</name>
    <name type="ordered locus">Bmul_2521</name>
    <name type="ordered locus">BMULJ_00717</name>
</gene>